<accession>A0KB03</accession>
<name>BIOF_BURCH</name>
<evidence type="ECO:0000255" key="1">
    <source>
        <dbReference type="HAMAP-Rule" id="MF_01693"/>
    </source>
</evidence>
<gene>
    <name evidence="1" type="primary">bioF</name>
    <name type="ordered locus">Bcen2424_2932</name>
</gene>
<comment type="function">
    <text evidence="1">Catalyzes the decarboxylative condensation of pimeloyl-[acyl-carrier protein] and L-alanine to produce 8-amino-7-oxononanoate (AON), [acyl-carrier protein], and carbon dioxide.</text>
</comment>
<comment type="catalytic activity">
    <reaction evidence="1">
        <text>6-carboxyhexanoyl-[ACP] + L-alanine + H(+) = (8S)-8-amino-7-oxononanoate + holo-[ACP] + CO2</text>
        <dbReference type="Rhea" id="RHEA:42288"/>
        <dbReference type="Rhea" id="RHEA-COMP:9685"/>
        <dbReference type="Rhea" id="RHEA-COMP:9955"/>
        <dbReference type="ChEBI" id="CHEBI:15378"/>
        <dbReference type="ChEBI" id="CHEBI:16526"/>
        <dbReference type="ChEBI" id="CHEBI:57972"/>
        <dbReference type="ChEBI" id="CHEBI:64479"/>
        <dbReference type="ChEBI" id="CHEBI:78846"/>
        <dbReference type="ChEBI" id="CHEBI:149468"/>
        <dbReference type="EC" id="2.3.1.47"/>
    </reaction>
</comment>
<comment type="cofactor">
    <cofactor evidence="1">
        <name>pyridoxal 5'-phosphate</name>
        <dbReference type="ChEBI" id="CHEBI:597326"/>
    </cofactor>
</comment>
<comment type="pathway">
    <text evidence="1">Cofactor biosynthesis; biotin biosynthesis.</text>
</comment>
<comment type="subunit">
    <text evidence="1">Homodimer.</text>
</comment>
<comment type="similarity">
    <text evidence="1">Belongs to the class-II pyridoxal-phosphate-dependent aminotransferase family. BioF subfamily.</text>
</comment>
<organism>
    <name type="scientific">Burkholderia cenocepacia (strain HI2424)</name>
    <dbReference type="NCBI Taxonomy" id="331272"/>
    <lineage>
        <taxon>Bacteria</taxon>
        <taxon>Pseudomonadati</taxon>
        <taxon>Pseudomonadota</taxon>
        <taxon>Betaproteobacteria</taxon>
        <taxon>Burkholderiales</taxon>
        <taxon>Burkholderiaceae</taxon>
        <taxon>Burkholderia</taxon>
        <taxon>Burkholderia cepacia complex</taxon>
    </lineage>
</organism>
<feature type="chain" id="PRO_0000380930" description="8-amino-7-oxononanoate synthase">
    <location>
        <begin position="1"/>
        <end position="406"/>
    </location>
</feature>
<feature type="binding site" evidence="1">
    <location>
        <position position="21"/>
    </location>
    <ligand>
        <name>substrate</name>
    </ligand>
</feature>
<feature type="binding site" evidence="1">
    <location>
        <begin position="112"/>
        <end position="113"/>
    </location>
    <ligand>
        <name>pyridoxal 5'-phosphate</name>
        <dbReference type="ChEBI" id="CHEBI:597326"/>
    </ligand>
</feature>
<feature type="binding site" evidence="1">
    <location>
        <position position="137"/>
    </location>
    <ligand>
        <name>substrate</name>
    </ligand>
</feature>
<feature type="binding site" evidence="1">
    <location>
        <position position="183"/>
    </location>
    <ligand>
        <name>pyridoxal 5'-phosphate</name>
        <dbReference type="ChEBI" id="CHEBI:597326"/>
    </ligand>
</feature>
<feature type="binding site" evidence="1">
    <location>
        <position position="211"/>
    </location>
    <ligand>
        <name>pyridoxal 5'-phosphate</name>
        <dbReference type="ChEBI" id="CHEBI:597326"/>
    </ligand>
</feature>
<feature type="binding site" evidence="1">
    <location>
        <position position="239"/>
    </location>
    <ligand>
        <name>pyridoxal 5'-phosphate</name>
        <dbReference type="ChEBI" id="CHEBI:597326"/>
    </ligand>
</feature>
<feature type="binding site" evidence="1">
    <location>
        <position position="358"/>
    </location>
    <ligand>
        <name>substrate</name>
    </ligand>
</feature>
<feature type="modified residue" description="N6-(pyridoxal phosphate)lysine" evidence="1">
    <location>
        <position position="242"/>
    </location>
</feature>
<sequence>MSLLDTLQRGLADLDAQGLRRVRRIADTACDARMIVNRREIVGFASNDYLGLAAHPALVAAFAEGAQRYGAGSGGSHLLGGHSRAHARLEDELAGFAGGFSDAPRALYFSTGYMANLAAMTALAGKGATIFSDALNHASLIDGMRLSRANVQVYPHADTAALAALLDASEAETKLIVSDTVFSMDGDIAPLAELVALAERHGAWLVIDDAHGFGVLGPQGRGALAAAALRSPHLVYVGTLGKAAGVAGAFVIAHETVIEWLIQRARSYIFTTAAPPAVAHAVSASLKVIAGDEGDARRAHLAALIERTRALLRNTRWQPVDSHTAVQPLVIGSNDATLAAMRALDAHGLWVPAIRPPTVPAGTSRLRVSLSAAHSFDDLARLEAALIEASEAAAASVGAARQEAAA</sequence>
<reference key="1">
    <citation type="submission" date="2006-08" db="EMBL/GenBank/DDBJ databases">
        <title>Complete sequence of chromosome 1 of Burkholderia cenocepacia HI2424.</title>
        <authorList>
            <person name="Copeland A."/>
            <person name="Lucas S."/>
            <person name="Lapidus A."/>
            <person name="Barry K."/>
            <person name="Detter J.C."/>
            <person name="Glavina del Rio T."/>
            <person name="Hammon N."/>
            <person name="Israni S."/>
            <person name="Pitluck S."/>
            <person name="Chain P."/>
            <person name="Malfatti S."/>
            <person name="Shin M."/>
            <person name="Vergez L."/>
            <person name="Schmutz J."/>
            <person name="Larimer F."/>
            <person name="Land M."/>
            <person name="Hauser L."/>
            <person name="Kyrpides N."/>
            <person name="Kim E."/>
            <person name="LiPuma J.J."/>
            <person name="Gonzalez C.F."/>
            <person name="Konstantinidis K."/>
            <person name="Tiedje J.M."/>
            <person name="Richardson P."/>
        </authorList>
    </citation>
    <scope>NUCLEOTIDE SEQUENCE [LARGE SCALE GENOMIC DNA]</scope>
    <source>
        <strain>HI2424</strain>
    </source>
</reference>
<protein>
    <recommendedName>
        <fullName evidence="1">8-amino-7-oxononanoate synthase</fullName>
        <shortName evidence="1">AONS</shortName>
        <ecNumber evidence="1">2.3.1.47</ecNumber>
    </recommendedName>
    <alternativeName>
        <fullName evidence="1">7-keto-8-amino-pelargonic acid synthase</fullName>
        <shortName evidence="1">7-KAP synthase</shortName>
        <shortName evidence="1">KAPA synthase</shortName>
    </alternativeName>
    <alternativeName>
        <fullName evidence="1">8-amino-7-ketopelargonate synthase</fullName>
    </alternativeName>
</protein>
<dbReference type="EC" id="2.3.1.47" evidence="1"/>
<dbReference type="EMBL" id="CP000458">
    <property type="protein sequence ID" value="ABK09680.1"/>
    <property type="molecule type" value="Genomic_DNA"/>
</dbReference>
<dbReference type="RefSeq" id="WP_011546339.1">
    <property type="nucleotide sequence ID" value="NC_008542.1"/>
</dbReference>
<dbReference type="SMR" id="A0KB03"/>
<dbReference type="KEGG" id="bch:Bcen2424_2932"/>
<dbReference type="HOGENOM" id="CLU_015846_11_2_4"/>
<dbReference type="UniPathway" id="UPA00078"/>
<dbReference type="GO" id="GO:0008710">
    <property type="term" value="F:8-amino-7-oxononanoate synthase activity"/>
    <property type="evidence" value="ECO:0007669"/>
    <property type="project" value="UniProtKB-UniRule"/>
</dbReference>
<dbReference type="GO" id="GO:0030170">
    <property type="term" value="F:pyridoxal phosphate binding"/>
    <property type="evidence" value="ECO:0007669"/>
    <property type="project" value="UniProtKB-UniRule"/>
</dbReference>
<dbReference type="GO" id="GO:0009102">
    <property type="term" value="P:biotin biosynthetic process"/>
    <property type="evidence" value="ECO:0007669"/>
    <property type="project" value="UniProtKB-UniRule"/>
</dbReference>
<dbReference type="Gene3D" id="3.90.1150.10">
    <property type="entry name" value="Aspartate Aminotransferase, domain 1"/>
    <property type="match status" value="1"/>
</dbReference>
<dbReference type="Gene3D" id="3.40.640.10">
    <property type="entry name" value="Type I PLP-dependent aspartate aminotransferase-like (Major domain)"/>
    <property type="match status" value="1"/>
</dbReference>
<dbReference type="HAMAP" id="MF_01693">
    <property type="entry name" value="BioF_aminotrans_2"/>
    <property type="match status" value="1"/>
</dbReference>
<dbReference type="InterPro" id="IPR004839">
    <property type="entry name" value="Aminotransferase_I/II_large"/>
</dbReference>
<dbReference type="InterPro" id="IPR050087">
    <property type="entry name" value="AON_synthase_class-II"/>
</dbReference>
<dbReference type="InterPro" id="IPR004723">
    <property type="entry name" value="AONS_Archaea/Proteobacteria"/>
</dbReference>
<dbReference type="InterPro" id="IPR022834">
    <property type="entry name" value="AONS_Proteobacteria"/>
</dbReference>
<dbReference type="InterPro" id="IPR015424">
    <property type="entry name" value="PyrdxlP-dep_Trfase"/>
</dbReference>
<dbReference type="InterPro" id="IPR015421">
    <property type="entry name" value="PyrdxlP-dep_Trfase_major"/>
</dbReference>
<dbReference type="InterPro" id="IPR015422">
    <property type="entry name" value="PyrdxlP-dep_Trfase_small"/>
</dbReference>
<dbReference type="NCBIfam" id="TIGR00858">
    <property type="entry name" value="bioF"/>
    <property type="match status" value="1"/>
</dbReference>
<dbReference type="PANTHER" id="PTHR13693:SF100">
    <property type="entry name" value="8-AMINO-7-OXONONANOATE SYNTHASE"/>
    <property type="match status" value="1"/>
</dbReference>
<dbReference type="PANTHER" id="PTHR13693">
    <property type="entry name" value="CLASS II AMINOTRANSFERASE/8-AMINO-7-OXONONANOATE SYNTHASE"/>
    <property type="match status" value="1"/>
</dbReference>
<dbReference type="Pfam" id="PF00155">
    <property type="entry name" value="Aminotran_1_2"/>
    <property type="match status" value="1"/>
</dbReference>
<dbReference type="SUPFAM" id="SSF53383">
    <property type="entry name" value="PLP-dependent transferases"/>
    <property type="match status" value="1"/>
</dbReference>
<proteinExistence type="inferred from homology"/>
<keyword id="KW-0093">Biotin biosynthesis</keyword>
<keyword id="KW-0663">Pyridoxal phosphate</keyword>
<keyword id="KW-0808">Transferase</keyword>